<geneLocation type="plasmid">
    <name>pTT27</name>
</geneLocation>
<proteinExistence type="inferred from homology"/>
<keyword id="KW-0560">Oxidoreductase</keyword>
<keyword id="KW-0614">Plasmid</keyword>
<keyword id="KW-1185">Reference proteome</keyword>
<evidence type="ECO:0000255" key="1">
    <source>
        <dbReference type="HAMAP-Rule" id="MF_01401"/>
    </source>
</evidence>
<accession>Q53W34</accession>
<feature type="chain" id="PRO_0000138604" description="Peptide methionine sulfoxide reductase MsrA">
    <location>
        <begin position="1"/>
        <end position="176"/>
    </location>
</feature>
<feature type="active site" evidence="1">
    <location>
        <position position="12"/>
    </location>
</feature>
<protein>
    <recommendedName>
        <fullName evidence="1">Peptide methionine sulfoxide reductase MsrA</fullName>
        <shortName evidence="1">Protein-methionine-S-oxide reductase</shortName>
        <ecNumber evidence="1">1.8.4.11</ecNumber>
    </recommendedName>
    <alternativeName>
        <fullName evidence="1">Peptide-methionine (S)-S-oxide reductase</fullName>
        <shortName evidence="1">Peptide Met(O) reductase</shortName>
    </alternativeName>
</protein>
<reference key="1">
    <citation type="submission" date="2004-11" db="EMBL/GenBank/DDBJ databases">
        <title>Complete genome sequence of Thermus thermophilus HB8.</title>
        <authorList>
            <person name="Masui R."/>
            <person name="Kurokawa K."/>
            <person name="Nakagawa N."/>
            <person name="Tokunaga F."/>
            <person name="Koyama Y."/>
            <person name="Shibata T."/>
            <person name="Oshima T."/>
            <person name="Yokoyama S."/>
            <person name="Yasunaga T."/>
            <person name="Kuramitsu S."/>
        </authorList>
    </citation>
    <scope>NUCLEOTIDE SEQUENCE [LARGE SCALE GENOMIC DNA]</scope>
    <source>
        <strain>ATCC 27634 / DSM 579 / HB8</strain>
    </source>
</reference>
<sequence>MPEEIATLAGGCFWCTEAAFKLLRGVLEVVPGYAGGHVPHPTYEEVCTGTTGHREAVQVRFDPGVLPYADLLRYFFAVHDPTSEDRQGPDVGPQYSPAIFYHSEEQKRVAEAVMRELAPLYPKPIATKLLPFTTFYPAEAYHRDYFARHPEAPYCRFVIAPKLEKARKAFKSLLRP</sequence>
<name>MSRA_THET8</name>
<dbReference type="EC" id="1.8.4.11" evidence="1"/>
<dbReference type="EMBL" id="AP008227">
    <property type="protein sequence ID" value="BAD71928.1"/>
    <property type="molecule type" value="Genomic_DNA"/>
</dbReference>
<dbReference type="RefSeq" id="WP_011229167.1">
    <property type="nucleotide sequence ID" value="NC_006462.1"/>
</dbReference>
<dbReference type="RefSeq" id="YP_145371.1">
    <property type="nucleotide sequence ID" value="NC_006462.1"/>
</dbReference>
<dbReference type="SMR" id="Q53W34"/>
<dbReference type="EnsemblBacteria" id="BAD71928">
    <property type="protein sequence ID" value="BAD71928"/>
    <property type="gene ID" value="BAD71928"/>
</dbReference>
<dbReference type="GeneID" id="3169584"/>
<dbReference type="KEGG" id="ttj:TTHB132"/>
<dbReference type="PATRIC" id="fig|300852.9.peg.2077"/>
<dbReference type="HOGENOM" id="CLU_031040_10_0_0"/>
<dbReference type="PhylomeDB" id="Q53W34"/>
<dbReference type="Proteomes" id="UP000000532">
    <property type="component" value="Plasmid pTT27"/>
</dbReference>
<dbReference type="GO" id="GO:0033744">
    <property type="term" value="F:L-methionine:thioredoxin-disulfide S-oxidoreductase activity"/>
    <property type="evidence" value="ECO:0007669"/>
    <property type="project" value="RHEA"/>
</dbReference>
<dbReference type="GO" id="GO:0008113">
    <property type="term" value="F:peptide-methionine (S)-S-oxide reductase activity"/>
    <property type="evidence" value="ECO:0007669"/>
    <property type="project" value="UniProtKB-UniRule"/>
</dbReference>
<dbReference type="GO" id="GO:0036211">
    <property type="term" value="P:protein modification process"/>
    <property type="evidence" value="ECO:0007669"/>
    <property type="project" value="UniProtKB-UniRule"/>
</dbReference>
<dbReference type="Gene3D" id="3.30.1060.10">
    <property type="entry name" value="Peptide methionine sulphoxide reductase MsrA"/>
    <property type="match status" value="1"/>
</dbReference>
<dbReference type="HAMAP" id="MF_01401">
    <property type="entry name" value="MsrA"/>
    <property type="match status" value="1"/>
</dbReference>
<dbReference type="InterPro" id="IPR002569">
    <property type="entry name" value="Met_Sox_Rdtase_MsrA_dom"/>
</dbReference>
<dbReference type="InterPro" id="IPR036509">
    <property type="entry name" value="Met_Sox_Rdtase_MsrA_sf"/>
</dbReference>
<dbReference type="NCBIfam" id="TIGR00401">
    <property type="entry name" value="msrA"/>
    <property type="match status" value="1"/>
</dbReference>
<dbReference type="PANTHER" id="PTHR43774">
    <property type="entry name" value="PEPTIDE METHIONINE SULFOXIDE REDUCTASE"/>
    <property type="match status" value="1"/>
</dbReference>
<dbReference type="PANTHER" id="PTHR43774:SF1">
    <property type="entry name" value="PEPTIDE METHIONINE SULFOXIDE REDUCTASE MSRA 2"/>
    <property type="match status" value="1"/>
</dbReference>
<dbReference type="Pfam" id="PF01625">
    <property type="entry name" value="PMSR"/>
    <property type="match status" value="1"/>
</dbReference>
<dbReference type="SUPFAM" id="SSF55068">
    <property type="entry name" value="Peptide methionine sulfoxide reductase"/>
    <property type="match status" value="1"/>
</dbReference>
<comment type="function">
    <text evidence="1">Has an important function as a repair enzyme for proteins that have been inactivated by oxidation. Catalyzes the reversible oxidation-reduction of methionine sulfoxide in proteins to methionine.</text>
</comment>
<comment type="catalytic activity">
    <reaction evidence="1">
        <text>L-methionyl-[protein] + [thioredoxin]-disulfide + H2O = L-methionyl-(S)-S-oxide-[protein] + [thioredoxin]-dithiol</text>
        <dbReference type="Rhea" id="RHEA:14217"/>
        <dbReference type="Rhea" id="RHEA-COMP:10698"/>
        <dbReference type="Rhea" id="RHEA-COMP:10700"/>
        <dbReference type="Rhea" id="RHEA-COMP:12313"/>
        <dbReference type="Rhea" id="RHEA-COMP:12315"/>
        <dbReference type="ChEBI" id="CHEBI:15377"/>
        <dbReference type="ChEBI" id="CHEBI:16044"/>
        <dbReference type="ChEBI" id="CHEBI:29950"/>
        <dbReference type="ChEBI" id="CHEBI:44120"/>
        <dbReference type="ChEBI" id="CHEBI:50058"/>
        <dbReference type="EC" id="1.8.4.11"/>
    </reaction>
</comment>
<comment type="catalytic activity">
    <reaction evidence="1">
        <text>[thioredoxin]-disulfide + L-methionine + H2O = L-methionine (S)-S-oxide + [thioredoxin]-dithiol</text>
        <dbReference type="Rhea" id="RHEA:19993"/>
        <dbReference type="Rhea" id="RHEA-COMP:10698"/>
        <dbReference type="Rhea" id="RHEA-COMP:10700"/>
        <dbReference type="ChEBI" id="CHEBI:15377"/>
        <dbReference type="ChEBI" id="CHEBI:29950"/>
        <dbReference type="ChEBI" id="CHEBI:50058"/>
        <dbReference type="ChEBI" id="CHEBI:57844"/>
        <dbReference type="ChEBI" id="CHEBI:58772"/>
        <dbReference type="EC" id="1.8.4.11"/>
    </reaction>
</comment>
<comment type="similarity">
    <text evidence="1">Belongs to the MsrA Met sulfoxide reductase family.</text>
</comment>
<organism>
    <name type="scientific">Thermus thermophilus (strain ATCC 27634 / DSM 579 / HB8)</name>
    <dbReference type="NCBI Taxonomy" id="300852"/>
    <lineage>
        <taxon>Bacteria</taxon>
        <taxon>Thermotogati</taxon>
        <taxon>Deinococcota</taxon>
        <taxon>Deinococci</taxon>
        <taxon>Thermales</taxon>
        <taxon>Thermaceae</taxon>
        <taxon>Thermus</taxon>
    </lineage>
</organism>
<gene>
    <name evidence="1" type="primary">msrA</name>
    <name type="ordered locus">TTHB132</name>
</gene>